<gene>
    <name type="primary">RBBP8NL</name>
    <name type="synonym">C20orf151</name>
</gene>
<keyword id="KW-1267">Proteomics identification</keyword>
<keyword id="KW-1185">Reference proteome</keyword>
<name>RB8NL_HUMAN</name>
<accession>Q8NC74</accession>
<accession>B2RP98</accession>
<accession>Q8N4Z9</accession>
<accession>Q9BR75</accession>
<accession>Q9H0Y9</accession>
<sequence>MESFMESLNRLKEIHEKEVLGLQNKLLELNSERCRDAQRIEELFSKNHQLREQQKTLKENLRVLENRLRAGLCDRCMVTQELARKRQQEFESSHLQNLQRIFILTNEMNGLKEENETLKEEVKRLRGLGDRPKPRAKEGTSDPPSPLLLPSPGGWKAITEKPPGGHEEAEEDHQGVGLRGEEKPAGHRTSPVAKISPGATLPESRAPDMSPQRISNQLHGTIAVVRPGSQACPADRGPANGTPPPLPARSSPPSPAYERGLSLDSFLRASRPSAMTHEAPKLSPKVDRLCLLNRPLSLHLQSPHSSPLAPAAAPSDPRLQDLKAREAEAWEEPTELLGLPSALAGMQDLRLEGALHLLLAQQQLRARARAGSVRPRGQPTPGEMLPSLPVGSDSEGPENEGTRAALAAAGLSGGRHTQPAGPGRAQRTEAAATQDCALDKPLDLSEWGRARGQDTPKPAGQHGSLSPAAAHTASPEPPTQSGPLTRSPQALSNGTKGTRVPEQEEASTPMDPSRPLPGSQLSLSSPGSTEDEDTGRPLPPPHPQPPPHPQPPDLDGHPEPSKAEVLRPESDELDETDTPGSEVGLSSQAEATTSTTGEGPECICTQEHGQGPPRKRKRASEPGDKASKKPSRGRRKLTATEGPGSPRDAEDHSPSPNSSPWEET</sequence>
<protein>
    <recommendedName>
        <fullName>RBBP8 N-terminal-like protein</fullName>
    </recommendedName>
</protein>
<feature type="chain" id="PRO_0000079470" description="RBBP8 N-terminal-like protein">
    <location>
        <begin position="1"/>
        <end position="664"/>
    </location>
</feature>
<feature type="region of interest" description="Disordered" evidence="1">
    <location>
        <begin position="125"/>
        <end position="284"/>
    </location>
</feature>
<feature type="region of interest" description="Disordered" evidence="1">
    <location>
        <begin position="369"/>
        <end position="664"/>
    </location>
</feature>
<feature type="compositionally biased region" description="Basic and acidic residues" evidence="1">
    <location>
        <begin position="125"/>
        <end position="140"/>
    </location>
</feature>
<feature type="compositionally biased region" description="Pro residues" evidence="1">
    <location>
        <begin position="241"/>
        <end position="255"/>
    </location>
</feature>
<feature type="compositionally biased region" description="Basic and acidic residues" evidence="1">
    <location>
        <begin position="437"/>
        <end position="454"/>
    </location>
</feature>
<feature type="compositionally biased region" description="Polar residues" evidence="1">
    <location>
        <begin position="481"/>
        <end position="496"/>
    </location>
</feature>
<feature type="compositionally biased region" description="Low complexity" evidence="1">
    <location>
        <begin position="516"/>
        <end position="528"/>
    </location>
</feature>
<feature type="compositionally biased region" description="Pro residues" evidence="1">
    <location>
        <begin position="537"/>
        <end position="552"/>
    </location>
</feature>
<feature type="compositionally biased region" description="Basic and acidic residues" evidence="1">
    <location>
        <begin position="554"/>
        <end position="570"/>
    </location>
</feature>
<feature type="compositionally biased region" description="Polar residues" evidence="1">
    <location>
        <begin position="584"/>
        <end position="597"/>
    </location>
</feature>
<feature type="compositionally biased region" description="Basic residues" evidence="1">
    <location>
        <begin position="628"/>
        <end position="637"/>
    </location>
</feature>
<feature type="compositionally biased region" description="Polar residues" evidence="1">
    <location>
        <begin position="654"/>
        <end position="664"/>
    </location>
</feature>
<feature type="sequence variant" id="VAR_056849" description="In dbSNP:rs3810553." evidence="2">
    <original>D</original>
    <variation>N</variation>
    <location>
        <position position="348"/>
    </location>
</feature>
<feature type="sequence variant" id="VAR_056850" description="In dbSNP:rs10888228.">
    <original>A</original>
    <variation>T</variation>
    <location>
        <position position="408"/>
    </location>
</feature>
<feature type="sequence variant" id="VAR_056851" description="In dbSNP:rs6089366.">
    <original>E</original>
    <variation>K</variation>
    <location>
        <position position="607"/>
    </location>
</feature>
<feature type="sequence variant" id="VAR_056852" description="In dbSNP:rs2236200." evidence="2">
    <original>L</original>
    <variation>R</variation>
    <location>
        <position position="637"/>
    </location>
</feature>
<feature type="sequence conflict" description="In Ref. 1; BAC11293." evidence="3" ref="1">
    <original>G</original>
    <variation>V</variation>
    <location>
        <position position="127"/>
    </location>
</feature>
<dbReference type="EMBL" id="AK074919">
    <property type="protein sequence ID" value="BAC11293.1"/>
    <property type="molecule type" value="mRNA"/>
</dbReference>
<dbReference type="EMBL" id="AL121832">
    <property type="status" value="NOT_ANNOTATED_CDS"/>
    <property type="molecule type" value="Genomic_DNA"/>
</dbReference>
<dbReference type="EMBL" id="BC006450">
    <property type="protein sequence ID" value="AAH06450.1"/>
    <property type="molecule type" value="mRNA"/>
</dbReference>
<dbReference type="EMBL" id="BC033142">
    <property type="protein sequence ID" value="AAH33142.2"/>
    <property type="molecule type" value="mRNA"/>
</dbReference>
<dbReference type="EMBL" id="BC137326">
    <property type="protein sequence ID" value="AAI37327.1"/>
    <property type="molecule type" value="mRNA"/>
</dbReference>
<dbReference type="EMBL" id="BC137327">
    <property type="protein sequence ID" value="AAI37328.1"/>
    <property type="molecule type" value="mRNA"/>
</dbReference>
<dbReference type="CCDS" id="CCDS13498.1"/>
<dbReference type="RefSeq" id="NP_543023.2">
    <property type="nucleotide sequence ID" value="NM_080833.3"/>
</dbReference>
<dbReference type="SMR" id="Q8NC74"/>
<dbReference type="BioGRID" id="126756">
    <property type="interactions" value="11"/>
</dbReference>
<dbReference type="FunCoup" id="Q8NC74">
    <property type="interactions" value="224"/>
</dbReference>
<dbReference type="IntAct" id="Q8NC74">
    <property type="interactions" value="10"/>
</dbReference>
<dbReference type="MINT" id="Q8NC74"/>
<dbReference type="STRING" id="9606.ENSP00000252998"/>
<dbReference type="GlyGen" id="Q8NC74">
    <property type="glycosylation" value="1 site"/>
</dbReference>
<dbReference type="iPTMnet" id="Q8NC74"/>
<dbReference type="PhosphoSitePlus" id="Q8NC74"/>
<dbReference type="BioMuta" id="RBBP8NL"/>
<dbReference type="DMDM" id="60416376"/>
<dbReference type="jPOST" id="Q8NC74"/>
<dbReference type="MassIVE" id="Q8NC74"/>
<dbReference type="PaxDb" id="9606-ENSP00000252998"/>
<dbReference type="PeptideAtlas" id="Q8NC74"/>
<dbReference type="ProteomicsDB" id="72860"/>
<dbReference type="Antibodypedia" id="48245">
    <property type="antibodies" value="39 antibodies from 7 providers"/>
</dbReference>
<dbReference type="DNASU" id="140893"/>
<dbReference type="Ensembl" id="ENST00000252998.2">
    <property type="protein sequence ID" value="ENSP00000252998.1"/>
    <property type="gene ID" value="ENSG00000130701.4"/>
</dbReference>
<dbReference type="GeneID" id="140893"/>
<dbReference type="KEGG" id="hsa:140893"/>
<dbReference type="MANE-Select" id="ENST00000252998.2">
    <property type="protein sequence ID" value="ENSP00000252998.1"/>
    <property type="RefSeq nucleotide sequence ID" value="NM_080833.3"/>
    <property type="RefSeq protein sequence ID" value="NP_543023.2"/>
</dbReference>
<dbReference type="UCSC" id="uc002ycw.3">
    <property type="organism name" value="human"/>
</dbReference>
<dbReference type="AGR" id="HGNC:16144"/>
<dbReference type="CTD" id="140893"/>
<dbReference type="DisGeNET" id="140893"/>
<dbReference type="GeneCards" id="RBBP8NL"/>
<dbReference type="HGNC" id="HGNC:16144">
    <property type="gene designation" value="RBBP8NL"/>
</dbReference>
<dbReference type="HPA" id="ENSG00000130701">
    <property type="expression patterns" value="Tissue enhanced (esophagus)"/>
</dbReference>
<dbReference type="neXtProt" id="NX_Q8NC74"/>
<dbReference type="OpenTargets" id="ENSG00000130701"/>
<dbReference type="PharmGKB" id="PA25693"/>
<dbReference type="VEuPathDB" id="HostDB:ENSG00000130701"/>
<dbReference type="eggNOG" id="ENOG502RTF0">
    <property type="taxonomic scope" value="Eukaryota"/>
</dbReference>
<dbReference type="GeneTree" id="ENSGT00530000063835"/>
<dbReference type="HOGENOM" id="CLU_027960_0_0_1"/>
<dbReference type="InParanoid" id="Q8NC74"/>
<dbReference type="OMA" id="RCQVTQE"/>
<dbReference type="OrthoDB" id="8809203at2759"/>
<dbReference type="PAN-GO" id="Q8NC74">
    <property type="GO annotations" value="0 GO annotations based on evolutionary models"/>
</dbReference>
<dbReference type="PhylomeDB" id="Q8NC74"/>
<dbReference type="TreeFam" id="TF336239"/>
<dbReference type="PathwayCommons" id="Q8NC74"/>
<dbReference type="SignaLink" id="Q8NC74"/>
<dbReference type="BioGRID-ORCS" id="140893">
    <property type="hits" value="17 hits in 1148 CRISPR screens"/>
</dbReference>
<dbReference type="ChiTaRS" id="RBBP8NL">
    <property type="organism name" value="human"/>
</dbReference>
<dbReference type="GenomeRNAi" id="140893"/>
<dbReference type="Pharos" id="Q8NC74">
    <property type="development level" value="Tdark"/>
</dbReference>
<dbReference type="PRO" id="PR:Q8NC74"/>
<dbReference type="Proteomes" id="UP000005640">
    <property type="component" value="Chromosome 20"/>
</dbReference>
<dbReference type="RNAct" id="Q8NC74">
    <property type="molecule type" value="protein"/>
</dbReference>
<dbReference type="Bgee" id="ENSG00000130701">
    <property type="expression patterns" value="Expressed in lower esophagus mucosa and 92 other cell types or tissues"/>
</dbReference>
<dbReference type="GO" id="GO:0005615">
    <property type="term" value="C:extracellular space"/>
    <property type="evidence" value="ECO:0007005"/>
    <property type="project" value="UniProtKB"/>
</dbReference>
<dbReference type="InterPro" id="IPR019518">
    <property type="entry name" value="CtIP_N"/>
</dbReference>
<dbReference type="InterPro" id="IPR033316">
    <property type="entry name" value="RBBP8-like"/>
</dbReference>
<dbReference type="PANTHER" id="PTHR15107:SF3">
    <property type="entry name" value="RBBP8 N-TERMINAL-LIKE PROTEIN"/>
    <property type="match status" value="1"/>
</dbReference>
<dbReference type="PANTHER" id="PTHR15107">
    <property type="entry name" value="RETINOBLASTOMA BINDING PROTEIN 8"/>
    <property type="match status" value="1"/>
</dbReference>
<dbReference type="Pfam" id="PF10482">
    <property type="entry name" value="CtIP_N"/>
    <property type="match status" value="1"/>
</dbReference>
<reference key="1">
    <citation type="journal article" date="2004" name="Nat. Genet.">
        <title>Complete sequencing and characterization of 21,243 full-length human cDNAs.</title>
        <authorList>
            <person name="Ota T."/>
            <person name="Suzuki Y."/>
            <person name="Nishikawa T."/>
            <person name="Otsuki T."/>
            <person name="Sugiyama T."/>
            <person name="Irie R."/>
            <person name="Wakamatsu A."/>
            <person name="Hayashi K."/>
            <person name="Sato H."/>
            <person name="Nagai K."/>
            <person name="Kimura K."/>
            <person name="Makita H."/>
            <person name="Sekine M."/>
            <person name="Obayashi M."/>
            <person name="Nishi T."/>
            <person name="Shibahara T."/>
            <person name="Tanaka T."/>
            <person name="Ishii S."/>
            <person name="Yamamoto J."/>
            <person name="Saito K."/>
            <person name="Kawai Y."/>
            <person name="Isono Y."/>
            <person name="Nakamura Y."/>
            <person name="Nagahari K."/>
            <person name="Murakami K."/>
            <person name="Yasuda T."/>
            <person name="Iwayanagi T."/>
            <person name="Wagatsuma M."/>
            <person name="Shiratori A."/>
            <person name="Sudo H."/>
            <person name="Hosoiri T."/>
            <person name="Kaku Y."/>
            <person name="Kodaira H."/>
            <person name="Kondo H."/>
            <person name="Sugawara M."/>
            <person name="Takahashi M."/>
            <person name="Kanda K."/>
            <person name="Yokoi T."/>
            <person name="Furuya T."/>
            <person name="Kikkawa E."/>
            <person name="Omura Y."/>
            <person name="Abe K."/>
            <person name="Kamihara K."/>
            <person name="Katsuta N."/>
            <person name="Sato K."/>
            <person name="Tanikawa M."/>
            <person name="Yamazaki M."/>
            <person name="Ninomiya K."/>
            <person name="Ishibashi T."/>
            <person name="Yamashita H."/>
            <person name="Murakawa K."/>
            <person name="Fujimori K."/>
            <person name="Tanai H."/>
            <person name="Kimata M."/>
            <person name="Watanabe M."/>
            <person name="Hiraoka S."/>
            <person name="Chiba Y."/>
            <person name="Ishida S."/>
            <person name="Ono Y."/>
            <person name="Takiguchi S."/>
            <person name="Watanabe S."/>
            <person name="Yosida M."/>
            <person name="Hotuta T."/>
            <person name="Kusano J."/>
            <person name="Kanehori K."/>
            <person name="Takahashi-Fujii A."/>
            <person name="Hara H."/>
            <person name="Tanase T.-O."/>
            <person name="Nomura Y."/>
            <person name="Togiya S."/>
            <person name="Komai F."/>
            <person name="Hara R."/>
            <person name="Takeuchi K."/>
            <person name="Arita M."/>
            <person name="Imose N."/>
            <person name="Musashino K."/>
            <person name="Yuuki H."/>
            <person name="Oshima A."/>
            <person name="Sasaki N."/>
            <person name="Aotsuka S."/>
            <person name="Yoshikawa Y."/>
            <person name="Matsunawa H."/>
            <person name="Ichihara T."/>
            <person name="Shiohata N."/>
            <person name="Sano S."/>
            <person name="Moriya S."/>
            <person name="Momiyama H."/>
            <person name="Satoh N."/>
            <person name="Takami S."/>
            <person name="Terashima Y."/>
            <person name="Suzuki O."/>
            <person name="Nakagawa S."/>
            <person name="Senoh A."/>
            <person name="Mizoguchi H."/>
            <person name="Goto Y."/>
            <person name="Shimizu F."/>
            <person name="Wakebe H."/>
            <person name="Hishigaki H."/>
            <person name="Watanabe T."/>
            <person name="Sugiyama A."/>
            <person name="Takemoto M."/>
            <person name="Kawakami B."/>
            <person name="Yamazaki M."/>
            <person name="Watanabe K."/>
            <person name="Kumagai A."/>
            <person name="Itakura S."/>
            <person name="Fukuzumi Y."/>
            <person name="Fujimori Y."/>
            <person name="Komiyama M."/>
            <person name="Tashiro H."/>
            <person name="Tanigami A."/>
            <person name="Fujiwara T."/>
            <person name="Ono T."/>
            <person name="Yamada K."/>
            <person name="Fujii Y."/>
            <person name="Ozaki K."/>
            <person name="Hirao M."/>
            <person name="Ohmori Y."/>
            <person name="Kawabata A."/>
            <person name="Hikiji T."/>
            <person name="Kobatake N."/>
            <person name="Inagaki H."/>
            <person name="Ikema Y."/>
            <person name="Okamoto S."/>
            <person name="Okitani R."/>
            <person name="Kawakami T."/>
            <person name="Noguchi S."/>
            <person name="Itoh T."/>
            <person name="Shigeta K."/>
            <person name="Senba T."/>
            <person name="Matsumura K."/>
            <person name="Nakajima Y."/>
            <person name="Mizuno T."/>
            <person name="Morinaga M."/>
            <person name="Sasaki M."/>
            <person name="Togashi T."/>
            <person name="Oyama M."/>
            <person name="Hata H."/>
            <person name="Watanabe M."/>
            <person name="Komatsu T."/>
            <person name="Mizushima-Sugano J."/>
            <person name="Satoh T."/>
            <person name="Shirai Y."/>
            <person name="Takahashi Y."/>
            <person name="Nakagawa K."/>
            <person name="Okumura K."/>
            <person name="Nagase T."/>
            <person name="Nomura N."/>
            <person name="Kikuchi H."/>
            <person name="Masuho Y."/>
            <person name="Yamashita R."/>
            <person name="Nakai K."/>
            <person name="Yada T."/>
            <person name="Nakamura Y."/>
            <person name="Ohara O."/>
            <person name="Isogai T."/>
            <person name="Sugano S."/>
        </authorList>
    </citation>
    <scope>NUCLEOTIDE SEQUENCE [LARGE SCALE MRNA]</scope>
    <source>
        <tissue>Teratocarcinoma</tissue>
    </source>
</reference>
<reference key="2">
    <citation type="journal article" date="2001" name="Nature">
        <title>The DNA sequence and comparative analysis of human chromosome 20.</title>
        <authorList>
            <person name="Deloukas P."/>
            <person name="Matthews L.H."/>
            <person name="Ashurst J.L."/>
            <person name="Burton J."/>
            <person name="Gilbert J.G.R."/>
            <person name="Jones M."/>
            <person name="Stavrides G."/>
            <person name="Almeida J.P."/>
            <person name="Babbage A.K."/>
            <person name="Bagguley C.L."/>
            <person name="Bailey J."/>
            <person name="Barlow K.F."/>
            <person name="Bates K.N."/>
            <person name="Beard L.M."/>
            <person name="Beare D.M."/>
            <person name="Beasley O.P."/>
            <person name="Bird C.P."/>
            <person name="Blakey S.E."/>
            <person name="Bridgeman A.M."/>
            <person name="Brown A.J."/>
            <person name="Buck D."/>
            <person name="Burrill W.D."/>
            <person name="Butler A.P."/>
            <person name="Carder C."/>
            <person name="Carter N.P."/>
            <person name="Chapman J.C."/>
            <person name="Clamp M."/>
            <person name="Clark G."/>
            <person name="Clark L.N."/>
            <person name="Clark S.Y."/>
            <person name="Clee C.M."/>
            <person name="Clegg S."/>
            <person name="Cobley V.E."/>
            <person name="Collier R.E."/>
            <person name="Connor R.E."/>
            <person name="Corby N.R."/>
            <person name="Coulson A."/>
            <person name="Coville G.J."/>
            <person name="Deadman R."/>
            <person name="Dhami P.D."/>
            <person name="Dunn M."/>
            <person name="Ellington A.G."/>
            <person name="Frankland J.A."/>
            <person name="Fraser A."/>
            <person name="French L."/>
            <person name="Garner P."/>
            <person name="Grafham D.V."/>
            <person name="Griffiths C."/>
            <person name="Griffiths M.N.D."/>
            <person name="Gwilliam R."/>
            <person name="Hall R.E."/>
            <person name="Hammond S."/>
            <person name="Harley J.L."/>
            <person name="Heath P.D."/>
            <person name="Ho S."/>
            <person name="Holden J.L."/>
            <person name="Howden P.J."/>
            <person name="Huckle E."/>
            <person name="Hunt A.R."/>
            <person name="Hunt S.E."/>
            <person name="Jekosch K."/>
            <person name="Johnson C.M."/>
            <person name="Johnson D."/>
            <person name="Kay M.P."/>
            <person name="Kimberley A.M."/>
            <person name="King A."/>
            <person name="Knights A."/>
            <person name="Laird G.K."/>
            <person name="Lawlor S."/>
            <person name="Lehvaeslaiho M.H."/>
            <person name="Leversha M.A."/>
            <person name="Lloyd C."/>
            <person name="Lloyd D.M."/>
            <person name="Lovell J.D."/>
            <person name="Marsh V.L."/>
            <person name="Martin S.L."/>
            <person name="McConnachie L.J."/>
            <person name="McLay K."/>
            <person name="McMurray A.A."/>
            <person name="Milne S.A."/>
            <person name="Mistry D."/>
            <person name="Moore M.J.F."/>
            <person name="Mullikin J.C."/>
            <person name="Nickerson T."/>
            <person name="Oliver K."/>
            <person name="Parker A."/>
            <person name="Patel R."/>
            <person name="Pearce T.A.V."/>
            <person name="Peck A.I."/>
            <person name="Phillimore B.J.C.T."/>
            <person name="Prathalingam S.R."/>
            <person name="Plumb R.W."/>
            <person name="Ramsay H."/>
            <person name="Rice C.M."/>
            <person name="Ross M.T."/>
            <person name="Scott C.E."/>
            <person name="Sehra H.K."/>
            <person name="Shownkeen R."/>
            <person name="Sims S."/>
            <person name="Skuce C.D."/>
            <person name="Smith M.L."/>
            <person name="Soderlund C."/>
            <person name="Steward C.A."/>
            <person name="Sulston J.E."/>
            <person name="Swann R.M."/>
            <person name="Sycamore N."/>
            <person name="Taylor R."/>
            <person name="Tee L."/>
            <person name="Thomas D.W."/>
            <person name="Thorpe A."/>
            <person name="Tracey A."/>
            <person name="Tromans A.C."/>
            <person name="Vaudin M."/>
            <person name="Wall M."/>
            <person name="Wallis J.M."/>
            <person name="Whitehead S.L."/>
            <person name="Whittaker P."/>
            <person name="Willey D.L."/>
            <person name="Williams L."/>
            <person name="Williams S.A."/>
            <person name="Wilming L."/>
            <person name="Wray P.W."/>
            <person name="Hubbard T."/>
            <person name="Durbin R.M."/>
            <person name="Bentley D.R."/>
            <person name="Beck S."/>
            <person name="Rogers J."/>
        </authorList>
    </citation>
    <scope>NUCLEOTIDE SEQUENCE [LARGE SCALE GENOMIC DNA]</scope>
</reference>
<reference key="3">
    <citation type="journal article" date="2004" name="Genome Res.">
        <title>The status, quality, and expansion of the NIH full-length cDNA project: the Mammalian Gene Collection (MGC).</title>
        <authorList>
            <consortium name="The MGC Project Team"/>
        </authorList>
    </citation>
    <scope>NUCLEOTIDE SEQUENCE [LARGE SCALE MRNA]</scope>
    <scope>VARIANTS ASN-348 AND ARG-637</scope>
    <source>
        <tissue>Placenta</tissue>
    </source>
</reference>
<comment type="interaction">
    <interactant intactId="EBI-11322432">
        <id>Q8NC74</id>
    </interactant>
    <interactant intactId="EBI-351829">
        <id>O15145</id>
        <label>ARPC3</label>
    </interactant>
    <organismsDiffer>false</organismsDiffer>
    <experiments>3</experiments>
</comment>
<comment type="interaction">
    <interactant intactId="EBI-11322432">
        <id>Q8NC74</id>
    </interactant>
    <interactant intactId="EBI-14357960">
        <id>Q9BZP6</id>
        <label>CHIA</label>
    </interactant>
    <organismsDiffer>false</organismsDiffer>
    <experiments>3</experiments>
</comment>
<comment type="interaction">
    <interactant intactId="EBI-11322432">
        <id>Q8NC74</id>
    </interactant>
    <interactant intactId="EBI-10171902">
        <id>P56545-3</id>
        <label>CTBP2</label>
    </interactant>
    <organismsDiffer>false</organismsDiffer>
    <experiments>3</experiments>
</comment>
<comment type="interaction">
    <interactant intactId="EBI-11322432">
        <id>Q8NC74</id>
    </interactant>
    <interactant intactId="EBI-1175354">
        <id>Q9H6Z9</id>
        <label>EGLN3</label>
    </interactant>
    <organismsDiffer>false</organismsDiffer>
    <experiments>3</experiments>
</comment>
<comment type="interaction">
    <interactant intactId="EBI-11322432">
        <id>Q8NC74</id>
    </interactant>
    <interactant intactId="EBI-12036449">
        <id>Q659C4-6</id>
        <label>LARP1B</label>
    </interactant>
    <organismsDiffer>false</organismsDiffer>
    <experiments>3</experiments>
</comment>
<comment type="interaction">
    <interactant intactId="EBI-11322432">
        <id>Q8NC74</id>
    </interactant>
    <interactant intactId="EBI-713635">
        <id>O43639</id>
        <label>NCK2</label>
    </interactant>
    <organismsDiffer>false</organismsDiffer>
    <experiments>3</experiments>
</comment>
<comment type="interaction">
    <interactant intactId="EBI-11322432">
        <id>Q8NC74</id>
    </interactant>
    <interactant intactId="EBI-530034">
        <id>O43189</id>
        <label>PHF1</label>
    </interactant>
    <organismsDiffer>false</organismsDiffer>
    <experiments>3</experiments>
</comment>
<comment type="interaction">
    <interactant intactId="EBI-11322432">
        <id>Q8NC74</id>
    </interactant>
    <interactant intactId="EBI-714158">
        <id>Q13526</id>
        <label>PIN1</label>
    </interactant>
    <organismsDiffer>false</organismsDiffer>
    <experiments>3</experiments>
</comment>
<comment type="interaction">
    <interactant intactId="EBI-11322432">
        <id>Q8NC74</id>
    </interactant>
    <interactant intactId="EBI-5452779">
        <id>Q9BUI4</id>
        <label>POLR3C</label>
    </interactant>
    <organismsDiffer>false</organismsDiffer>
    <experiments>3</experiments>
</comment>
<organism>
    <name type="scientific">Homo sapiens</name>
    <name type="common">Human</name>
    <dbReference type="NCBI Taxonomy" id="9606"/>
    <lineage>
        <taxon>Eukaryota</taxon>
        <taxon>Metazoa</taxon>
        <taxon>Chordata</taxon>
        <taxon>Craniata</taxon>
        <taxon>Vertebrata</taxon>
        <taxon>Euteleostomi</taxon>
        <taxon>Mammalia</taxon>
        <taxon>Eutheria</taxon>
        <taxon>Euarchontoglires</taxon>
        <taxon>Primates</taxon>
        <taxon>Haplorrhini</taxon>
        <taxon>Catarrhini</taxon>
        <taxon>Hominidae</taxon>
        <taxon>Homo</taxon>
    </lineage>
</organism>
<proteinExistence type="evidence at protein level"/>
<evidence type="ECO:0000256" key="1">
    <source>
        <dbReference type="SAM" id="MobiDB-lite"/>
    </source>
</evidence>
<evidence type="ECO:0000269" key="2">
    <source>
    </source>
</evidence>
<evidence type="ECO:0000305" key="3"/>